<proteinExistence type="inferred from homology"/>
<dbReference type="EMBL" id="CU329670">
    <property type="protein sequence ID" value="CAB66164.1"/>
    <property type="molecule type" value="Genomic_DNA"/>
</dbReference>
<dbReference type="PIR" id="T50103">
    <property type="entry name" value="T50103"/>
</dbReference>
<dbReference type="RefSeq" id="NP_593656.1">
    <property type="nucleotide sequence ID" value="NM_001019088.2"/>
</dbReference>
<dbReference type="SMR" id="Q9US28"/>
<dbReference type="BioGRID" id="278828">
    <property type="interactions" value="1"/>
</dbReference>
<dbReference type="FunCoup" id="Q9US28">
    <property type="interactions" value="414"/>
</dbReference>
<dbReference type="STRING" id="284812.Q9US28"/>
<dbReference type="PaxDb" id="4896-SPAC1783.01.1"/>
<dbReference type="EnsemblFungi" id="SPAC1783.01.1">
    <property type="protein sequence ID" value="SPAC1783.01.1:pep"/>
    <property type="gene ID" value="SPAC1783.01"/>
</dbReference>
<dbReference type="KEGG" id="spo:2542364"/>
<dbReference type="PomBase" id="SPAC1783.01"/>
<dbReference type="VEuPathDB" id="FungiDB:SPAC1783.01"/>
<dbReference type="eggNOG" id="KOG1158">
    <property type="taxonomic scope" value="Eukaryota"/>
</dbReference>
<dbReference type="HOGENOM" id="CLU_001570_17_5_1"/>
<dbReference type="InParanoid" id="Q9US28"/>
<dbReference type="OMA" id="IYLCGSG"/>
<dbReference type="PhylomeDB" id="Q9US28"/>
<dbReference type="PRO" id="PR:Q9US28"/>
<dbReference type="Proteomes" id="UP000002485">
    <property type="component" value="Chromosome I"/>
</dbReference>
<dbReference type="GO" id="GO:0005829">
    <property type="term" value="C:cytosol"/>
    <property type="evidence" value="ECO:0000318"/>
    <property type="project" value="GO_Central"/>
</dbReference>
<dbReference type="GO" id="GO:0005739">
    <property type="term" value="C:mitochondrion"/>
    <property type="evidence" value="ECO:0007005"/>
    <property type="project" value="PomBase"/>
</dbReference>
<dbReference type="GO" id="GO:0030586">
    <property type="term" value="F:[methionine synthase] reductase (NADPH) activity"/>
    <property type="evidence" value="ECO:0000318"/>
    <property type="project" value="GO_Central"/>
</dbReference>
<dbReference type="GO" id="GO:0050660">
    <property type="term" value="F:flavin adenine dinucleotide binding"/>
    <property type="evidence" value="ECO:0000318"/>
    <property type="project" value="GO_Central"/>
</dbReference>
<dbReference type="GO" id="GO:0010181">
    <property type="term" value="F:FMN binding"/>
    <property type="evidence" value="ECO:0000318"/>
    <property type="project" value="GO_Central"/>
</dbReference>
<dbReference type="GO" id="GO:0050667">
    <property type="term" value="P:homocysteine metabolic process"/>
    <property type="evidence" value="ECO:0000318"/>
    <property type="project" value="GO_Central"/>
</dbReference>
<dbReference type="GO" id="GO:0009086">
    <property type="term" value="P:methionine biosynthetic process"/>
    <property type="evidence" value="ECO:0000318"/>
    <property type="project" value="GO_Central"/>
</dbReference>
<dbReference type="FunFam" id="3.40.50.80:FF:000027">
    <property type="entry name" value="FAD binding domain protein"/>
    <property type="match status" value="1"/>
</dbReference>
<dbReference type="FunFam" id="1.20.990.10:FF:000007">
    <property type="entry name" value="Methionine synthase reductase"/>
    <property type="match status" value="1"/>
</dbReference>
<dbReference type="Gene3D" id="1.20.990.10">
    <property type="entry name" value="NADPH-cytochrome p450 Reductase, Chain A, domain 3"/>
    <property type="match status" value="1"/>
</dbReference>
<dbReference type="Gene3D" id="3.40.50.80">
    <property type="entry name" value="Nucleotide-binding domain of ferredoxin-NADP reductase (FNR) module"/>
    <property type="match status" value="1"/>
</dbReference>
<dbReference type="Gene3D" id="2.40.30.10">
    <property type="entry name" value="Translation factors"/>
    <property type="match status" value="1"/>
</dbReference>
<dbReference type="InterPro" id="IPR003097">
    <property type="entry name" value="CysJ-like_FAD-binding"/>
</dbReference>
<dbReference type="InterPro" id="IPR017927">
    <property type="entry name" value="FAD-bd_FR_type"/>
</dbReference>
<dbReference type="InterPro" id="IPR001709">
    <property type="entry name" value="Flavoprot_Pyr_Nucl_cyt_Rdtase"/>
</dbReference>
<dbReference type="InterPro" id="IPR039261">
    <property type="entry name" value="FNR_nucleotide-bd"/>
</dbReference>
<dbReference type="InterPro" id="IPR023173">
    <property type="entry name" value="NADPH_Cyt_P450_Rdtase_alpha"/>
</dbReference>
<dbReference type="InterPro" id="IPR001433">
    <property type="entry name" value="OxRdtase_FAD/NAD-bd"/>
</dbReference>
<dbReference type="InterPro" id="IPR017938">
    <property type="entry name" value="Riboflavin_synthase-like_b-brl"/>
</dbReference>
<dbReference type="PANTHER" id="PTHR19384:SF84">
    <property type="entry name" value="METHIONINE SYNTHASE REDUCTASE"/>
    <property type="match status" value="1"/>
</dbReference>
<dbReference type="PANTHER" id="PTHR19384">
    <property type="entry name" value="NITRIC OXIDE SYNTHASE-RELATED"/>
    <property type="match status" value="1"/>
</dbReference>
<dbReference type="Pfam" id="PF00667">
    <property type="entry name" value="FAD_binding_1"/>
    <property type="match status" value="1"/>
</dbReference>
<dbReference type="Pfam" id="PF00175">
    <property type="entry name" value="NAD_binding_1"/>
    <property type="match status" value="1"/>
</dbReference>
<dbReference type="PRINTS" id="PR00371">
    <property type="entry name" value="FPNCR"/>
</dbReference>
<dbReference type="SUPFAM" id="SSF52343">
    <property type="entry name" value="Ferredoxin reductase-like, C-terminal NADP-linked domain"/>
    <property type="match status" value="1"/>
</dbReference>
<dbReference type="SUPFAM" id="SSF63380">
    <property type="entry name" value="Riboflavin synthase domain-like"/>
    <property type="match status" value="1"/>
</dbReference>
<dbReference type="PROSITE" id="PS51384">
    <property type="entry name" value="FAD_FR"/>
    <property type="match status" value="1"/>
</dbReference>
<gene>
    <name type="ORF">SPAC1783.01</name>
</gene>
<reference key="1">
    <citation type="journal article" date="2002" name="Nature">
        <title>The genome sequence of Schizosaccharomyces pombe.</title>
        <authorList>
            <person name="Wood V."/>
            <person name="Gwilliam R."/>
            <person name="Rajandream M.A."/>
            <person name="Lyne M.H."/>
            <person name="Lyne R."/>
            <person name="Stewart A."/>
            <person name="Sgouros J.G."/>
            <person name="Peat N."/>
            <person name="Hayles J."/>
            <person name="Baker S.G."/>
            <person name="Basham D."/>
            <person name="Bowman S."/>
            <person name="Brooks K."/>
            <person name="Brown D."/>
            <person name="Brown S."/>
            <person name="Chillingworth T."/>
            <person name="Churcher C.M."/>
            <person name="Collins M."/>
            <person name="Connor R."/>
            <person name="Cronin A."/>
            <person name="Davis P."/>
            <person name="Feltwell T."/>
            <person name="Fraser A."/>
            <person name="Gentles S."/>
            <person name="Goble A."/>
            <person name="Hamlin N."/>
            <person name="Harris D.E."/>
            <person name="Hidalgo J."/>
            <person name="Hodgson G."/>
            <person name="Holroyd S."/>
            <person name="Hornsby T."/>
            <person name="Howarth S."/>
            <person name="Huckle E.J."/>
            <person name="Hunt S."/>
            <person name="Jagels K."/>
            <person name="James K.D."/>
            <person name="Jones L."/>
            <person name="Jones M."/>
            <person name="Leather S."/>
            <person name="McDonald S."/>
            <person name="McLean J."/>
            <person name="Mooney P."/>
            <person name="Moule S."/>
            <person name="Mungall K.L."/>
            <person name="Murphy L.D."/>
            <person name="Niblett D."/>
            <person name="Odell C."/>
            <person name="Oliver K."/>
            <person name="O'Neil S."/>
            <person name="Pearson D."/>
            <person name="Quail M.A."/>
            <person name="Rabbinowitsch E."/>
            <person name="Rutherford K.M."/>
            <person name="Rutter S."/>
            <person name="Saunders D."/>
            <person name="Seeger K."/>
            <person name="Sharp S."/>
            <person name="Skelton J."/>
            <person name="Simmonds M.N."/>
            <person name="Squares R."/>
            <person name="Squares S."/>
            <person name="Stevens K."/>
            <person name="Taylor K."/>
            <person name="Taylor R.G."/>
            <person name="Tivey A."/>
            <person name="Walsh S.V."/>
            <person name="Warren T."/>
            <person name="Whitehead S."/>
            <person name="Woodward J.R."/>
            <person name="Volckaert G."/>
            <person name="Aert R."/>
            <person name="Robben J."/>
            <person name="Grymonprez B."/>
            <person name="Weltjens I."/>
            <person name="Vanstreels E."/>
            <person name="Rieger M."/>
            <person name="Schaefer M."/>
            <person name="Mueller-Auer S."/>
            <person name="Gabel C."/>
            <person name="Fuchs M."/>
            <person name="Duesterhoeft A."/>
            <person name="Fritzc C."/>
            <person name="Holzer E."/>
            <person name="Moestl D."/>
            <person name="Hilbert H."/>
            <person name="Borzym K."/>
            <person name="Langer I."/>
            <person name="Beck A."/>
            <person name="Lehrach H."/>
            <person name="Reinhardt R."/>
            <person name="Pohl T.M."/>
            <person name="Eger P."/>
            <person name="Zimmermann W."/>
            <person name="Wedler H."/>
            <person name="Wambutt R."/>
            <person name="Purnelle B."/>
            <person name="Goffeau A."/>
            <person name="Cadieu E."/>
            <person name="Dreano S."/>
            <person name="Gloux S."/>
            <person name="Lelaure V."/>
            <person name="Mottier S."/>
            <person name="Galibert F."/>
            <person name="Aves S.J."/>
            <person name="Xiang Z."/>
            <person name="Hunt C."/>
            <person name="Moore K."/>
            <person name="Hurst S.M."/>
            <person name="Lucas M."/>
            <person name="Rochet M."/>
            <person name="Gaillardin C."/>
            <person name="Tallada V.A."/>
            <person name="Garzon A."/>
            <person name="Thode G."/>
            <person name="Daga R.R."/>
            <person name="Cruzado L."/>
            <person name="Jimenez J."/>
            <person name="Sanchez M."/>
            <person name="del Rey F."/>
            <person name="Benito J."/>
            <person name="Dominguez A."/>
            <person name="Revuelta J.L."/>
            <person name="Moreno S."/>
            <person name="Armstrong J."/>
            <person name="Forsburg S.L."/>
            <person name="Cerutti L."/>
            <person name="Lowe T."/>
            <person name="McCombie W.R."/>
            <person name="Paulsen I."/>
            <person name="Potashkin J."/>
            <person name="Shpakovski G.V."/>
            <person name="Ussery D."/>
            <person name="Barrell B.G."/>
            <person name="Nurse P."/>
        </authorList>
    </citation>
    <scope>NUCLEOTIDE SEQUENCE [LARGE SCALE GENOMIC DNA]</scope>
    <source>
        <strain>972 / ATCC 24843</strain>
    </source>
</reference>
<reference key="2">
    <citation type="journal article" date="2006" name="Nat. Biotechnol.">
        <title>ORFeome cloning and global analysis of protein localization in the fission yeast Schizosaccharomyces pombe.</title>
        <authorList>
            <person name="Matsuyama A."/>
            <person name="Arai R."/>
            <person name="Yashiroda Y."/>
            <person name="Shirai A."/>
            <person name="Kamata A."/>
            <person name="Sekido S."/>
            <person name="Kobayashi Y."/>
            <person name="Hashimoto A."/>
            <person name="Hamamoto M."/>
            <person name="Hiraoka Y."/>
            <person name="Horinouchi S."/>
            <person name="Yoshida M."/>
        </authorList>
    </citation>
    <scope>SUBCELLULAR LOCATION [LARGE SCALE ANALYSIS]</scope>
</reference>
<keyword id="KW-0274">FAD</keyword>
<keyword id="KW-0285">Flavoprotein</keyword>
<keyword id="KW-0496">Mitochondrion</keyword>
<keyword id="KW-0560">Oxidoreductase</keyword>
<keyword id="KW-1185">Reference proteome</keyword>
<protein>
    <recommendedName>
        <fullName>Uncharacterized FAD-binding protein C1783.01</fullName>
    </recommendedName>
</protein>
<sequence length="583" mass="65872">MISHVLVKDTSCLKVRTSYKCFVKYFPKCSVQSSFHSYDELAFSRRLYNLPRTLLNSRYYSNHSHGLVHGSKSPPSSQFLVPSFLQFNGQLKALCNNSAFQALPIKLSDLQKHWPSLKPHPLPPKRVSLGIPSISNPPVDTVISDSPTSPHPPSFVQPHPPYGIFAAPILDVRVLTNPGAVKRTYNLCLDISKYPLLEGKDWKIGGSFGIMPPNSDAEVLHLAHLLKIPQHELYVTKVLRTNGGRWPTIWGEDKPRCLYTSLYHIFKWCSDFISKPPTKSLIRLLAEHTLNPVEKSVLLALSDFRQDESYCRICTQSCVTLPDILEAFPSCHPPVDHLISALPQLMPRWYSISNDPSLANKRLEMAFTVQEYHSPNGQSRTGICTGFLEDLALAFLKARHDGSLANKKFTVPMFRGVQQNPFAKEFHNDGPMCLIGAGVGIAPFRGFVQRRLANAACTGKVWIIQGCRDQKLDELYHGEWNTVPGHHKNPKCRAKKLVVESRNGRREYVQDAVRRHGDVIWDVLSHKNGRIYLCGSGNSFVSEIEKALMDVAMKYGKLSKEEAQKELKNWQKPMNCKLIKEVW</sequence>
<name>YKA1_SCHPO</name>
<accession>Q9US28</accession>
<feature type="chain" id="PRO_0000310845" description="Uncharacterized FAD-binding protein C1783.01">
    <location>
        <begin position="1"/>
        <end position="583"/>
    </location>
</feature>
<feature type="domain" description="FAD-binding FR-type" evidence="2">
    <location>
        <begin position="162"/>
        <end position="424"/>
    </location>
</feature>
<evidence type="ECO:0000250" key="1"/>
<evidence type="ECO:0000255" key="2">
    <source>
        <dbReference type="PROSITE-ProRule" id="PRU00716"/>
    </source>
</evidence>
<evidence type="ECO:0000269" key="3">
    <source>
    </source>
</evidence>
<evidence type="ECO:0000305" key="4"/>
<comment type="cofactor">
    <cofactor evidence="1">
        <name>FAD</name>
        <dbReference type="ChEBI" id="CHEBI:57692"/>
    </cofactor>
</comment>
<comment type="subcellular location">
    <subcellularLocation>
        <location evidence="3">Mitochondrion</location>
    </subcellularLocation>
</comment>
<comment type="similarity">
    <text evidence="4">Belongs to the flavoprotein pyridine nucleotide cytochrome reductase family.</text>
</comment>
<organism>
    <name type="scientific">Schizosaccharomyces pombe (strain 972 / ATCC 24843)</name>
    <name type="common">Fission yeast</name>
    <dbReference type="NCBI Taxonomy" id="284812"/>
    <lineage>
        <taxon>Eukaryota</taxon>
        <taxon>Fungi</taxon>
        <taxon>Dikarya</taxon>
        <taxon>Ascomycota</taxon>
        <taxon>Taphrinomycotina</taxon>
        <taxon>Schizosaccharomycetes</taxon>
        <taxon>Schizosaccharomycetales</taxon>
        <taxon>Schizosaccharomycetaceae</taxon>
        <taxon>Schizosaccharomyces</taxon>
    </lineage>
</organism>